<comment type="function">
    <text evidence="1">Regulator of biological processes that recruits a histone deacetylase to control gene transcription. May play a role in the entry into mitosis, negatively regulating the cell proliferation. Formation of stable complexes with geminiviridae replication-associated proteins may create a cellular environment which favors viral DNA replication (By similarity).</text>
</comment>
<comment type="subcellular location">
    <subcellularLocation>
        <location evidence="1">Nucleus</location>
    </subcellularLocation>
</comment>
<comment type="similarity">
    <text evidence="3">Belongs to the retinoblastoma protein (RB) family.</text>
</comment>
<proteinExistence type="evidence at transcript level"/>
<protein>
    <recommendedName>
        <fullName>Retinoblastoma-related protein 3</fullName>
        <shortName>ZmRBR3</shortName>
    </recommendedName>
</protein>
<organism>
    <name type="scientific">Zea mays</name>
    <name type="common">Maize</name>
    <dbReference type="NCBI Taxonomy" id="4577"/>
    <lineage>
        <taxon>Eukaryota</taxon>
        <taxon>Viridiplantae</taxon>
        <taxon>Streptophyta</taxon>
        <taxon>Embryophyta</taxon>
        <taxon>Tracheophyta</taxon>
        <taxon>Spermatophyta</taxon>
        <taxon>Magnoliopsida</taxon>
        <taxon>Liliopsida</taxon>
        <taxon>Poales</taxon>
        <taxon>Poaceae</taxon>
        <taxon>PACMAD clade</taxon>
        <taxon>Panicoideae</taxon>
        <taxon>Andropogonodae</taxon>
        <taxon>Andropogoneae</taxon>
        <taxon>Tripsacinae</taxon>
        <taxon>Zea</taxon>
    </lineage>
</organism>
<dbReference type="EMBL" id="DQ124423">
    <property type="protein sequence ID" value="AAZ99092.1"/>
    <property type="molecule type" value="mRNA"/>
</dbReference>
<dbReference type="RefSeq" id="NP_001105822.1">
    <property type="nucleotide sequence ID" value="NM_001112352.1"/>
</dbReference>
<dbReference type="RefSeq" id="XP_008649201.1">
    <property type="nucleotide sequence ID" value="XM_008650979.1"/>
</dbReference>
<dbReference type="RefSeq" id="XP_008649206.1">
    <property type="nucleotide sequence ID" value="XM_008650984.1"/>
</dbReference>
<dbReference type="SMR" id="Q3LXA7"/>
<dbReference type="FunCoup" id="Q3LXA7">
    <property type="interactions" value="2259"/>
</dbReference>
<dbReference type="STRING" id="4577.Q3LXA7"/>
<dbReference type="PaxDb" id="4577-GRMZM2G033828_P02"/>
<dbReference type="EnsemblPlants" id="Zm00001eb037120_T001">
    <property type="protein sequence ID" value="Zm00001eb037120_P001"/>
    <property type="gene ID" value="Zm00001eb037120"/>
</dbReference>
<dbReference type="GeneID" id="732723"/>
<dbReference type="Gramene" id="Zm00001eb037120_T001">
    <property type="protein sequence ID" value="Zm00001eb037120_P001"/>
    <property type="gene ID" value="Zm00001eb037120"/>
</dbReference>
<dbReference type="KEGG" id="zma:732723"/>
<dbReference type="MaizeGDB" id="1203650"/>
<dbReference type="eggNOG" id="KOG1010">
    <property type="taxonomic scope" value="Eukaryota"/>
</dbReference>
<dbReference type="InParanoid" id="Q3LXA7"/>
<dbReference type="OrthoDB" id="844594at2759"/>
<dbReference type="Proteomes" id="UP000007305">
    <property type="component" value="Chromosome 1"/>
</dbReference>
<dbReference type="ExpressionAtlas" id="Q3LXA7">
    <property type="expression patterns" value="baseline and differential"/>
</dbReference>
<dbReference type="GO" id="GO:0000785">
    <property type="term" value="C:chromatin"/>
    <property type="evidence" value="ECO:0000318"/>
    <property type="project" value="GO_Central"/>
</dbReference>
<dbReference type="GO" id="GO:0005634">
    <property type="term" value="C:nucleus"/>
    <property type="evidence" value="ECO:0007669"/>
    <property type="project" value="UniProtKB-SubCell"/>
</dbReference>
<dbReference type="GO" id="GO:0005667">
    <property type="term" value="C:transcription regulator complex"/>
    <property type="evidence" value="ECO:0000318"/>
    <property type="project" value="GO_Central"/>
</dbReference>
<dbReference type="GO" id="GO:0000977">
    <property type="term" value="F:RNA polymerase II transcription regulatory region sequence-specific DNA binding"/>
    <property type="evidence" value="ECO:0000318"/>
    <property type="project" value="GO_Central"/>
</dbReference>
<dbReference type="GO" id="GO:0030154">
    <property type="term" value="P:cell differentiation"/>
    <property type="evidence" value="ECO:0000318"/>
    <property type="project" value="GO_Central"/>
</dbReference>
<dbReference type="GO" id="GO:2000134">
    <property type="term" value="P:negative regulation of G1/S transition of mitotic cell cycle"/>
    <property type="evidence" value="ECO:0000318"/>
    <property type="project" value="GO_Central"/>
</dbReference>
<dbReference type="GO" id="GO:0006357">
    <property type="term" value="P:regulation of transcription by RNA polymerase II"/>
    <property type="evidence" value="ECO:0007669"/>
    <property type="project" value="InterPro"/>
</dbReference>
<dbReference type="FunFam" id="1.10.472.10:FF:000030">
    <property type="entry name" value="Retinoblastoma-related protein 1"/>
    <property type="match status" value="1"/>
</dbReference>
<dbReference type="FunFam" id="1.10.472.10:FF:000067">
    <property type="entry name" value="Retinoblastoma-related protein 1"/>
    <property type="match status" value="1"/>
</dbReference>
<dbReference type="FunFam" id="1.10.472.140:FF:000003">
    <property type="entry name" value="Retinoblastoma-related protein 1"/>
    <property type="match status" value="1"/>
</dbReference>
<dbReference type="Gene3D" id="1.10.472.140">
    <property type="match status" value="1"/>
</dbReference>
<dbReference type="Gene3D" id="1.10.472.10">
    <property type="entry name" value="Cyclin-like"/>
    <property type="match status" value="2"/>
</dbReference>
<dbReference type="InterPro" id="IPR013763">
    <property type="entry name" value="Cyclin-like_dom"/>
</dbReference>
<dbReference type="InterPro" id="IPR036915">
    <property type="entry name" value="Cyclin-like_sf"/>
</dbReference>
<dbReference type="InterPro" id="IPR002720">
    <property type="entry name" value="RB_A"/>
</dbReference>
<dbReference type="InterPro" id="IPR002719">
    <property type="entry name" value="RB_B"/>
</dbReference>
<dbReference type="InterPro" id="IPR028309">
    <property type="entry name" value="RB_fam"/>
</dbReference>
<dbReference type="InterPro" id="IPR024599">
    <property type="entry name" value="RB_N"/>
</dbReference>
<dbReference type="PANTHER" id="PTHR13742:SF17">
    <property type="entry name" value="RE32990P-RELATED"/>
    <property type="match status" value="1"/>
</dbReference>
<dbReference type="PANTHER" id="PTHR13742">
    <property type="entry name" value="RETINOBLASTOMA-ASSOCIATED PROTEIN RB -RELATED"/>
    <property type="match status" value="1"/>
</dbReference>
<dbReference type="Pfam" id="PF11934">
    <property type="entry name" value="DUF3452"/>
    <property type="match status" value="1"/>
</dbReference>
<dbReference type="Pfam" id="PF01858">
    <property type="entry name" value="RB_A"/>
    <property type="match status" value="1"/>
</dbReference>
<dbReference type="Pfam" id="PF01857">
    <property type="entry name" value="RB_B"/>
    <property type="match status" value="1"/>
</dbReference>
<dbReference type="SMART" id="SM00385">
    <property type="entry name" value="CYCLIN"/>
    <property type="match status" value="1"/>
</dbReference>
<dbReference type="SMART" id="SM01367">
    <property type="entry name" value="DUF3452"/>
    <property type="match status" value="1"/>
</dbReference>
<dbReference type="SMART" id="SM01368">
    <property type="entry name" value="RB_A"/>
    <property type="match status" value="1"/>
</dbReference>
<dbReference type="SUPFAM" id="SSF47954">
    <property type="entry name" value="Cyclin-like"/>
    <property type="match status" value="2"/>
</dbReference>
<accession>Q3LXA7</accession>
<keyword id="KW-0131">Cell cycle</keyword>
<keyword id="KW-0539">Nucleus</keyword>
<keyword id="KW-1185">Reference proteome</keyword>
<keyword id="KW-0678">Repressor</keyword>
<keyword id="KW-0804">Transcription</keyword>
<keyword id="KW-0805">Transcription regulation</keyword>
<feature type="chain" id="PRO_0000335248" description="Retinoblastoma-related protein 3">
    <location>
        <begin position="1"/>
        <end position="1010"/>
    </location>
</feature>
<feature type="region of interest" description="Pocket">
    <location>
        <begin position="416"/>
        <end position="858"/>
    </location>
</feature>
<feature type="region of interest" description="Domain A">
    <location>
        <begin position="416"/>
        <end position="616"/>
    </location>
</feature>
<feature type="region of interest" description="Spacer">
    <location>
        <begin position="617"/>
        <end position="727"/>
    </location>
</feature>
<feature type="region of interest" description="Domain B">
    <location>
        <begin position="728"/>
        <end position="858"/>
    </location>
</feature>
<feature type="region of interest" description="Disordered" evidence="2">
    <location>
        <begin position="867"/>
        <end position="889"/>
    </location>
</feature>
<feature type="region of interest" description="Disordered" evidence="2">
    <location>
        <begin position="986"/>
        <end position="1010"/>
    </location>
</feature>
<reference key="1">
    <citation type="journal article" date="2005" name="Proc. Natl. Acad. Sci. U.S.A.">
        <title>RBR3, a member of the retinoblastoma-related family from maize, is regulated by the RBR1/E2F pathway.</title>
        <authorList>
            <person name="Sabelli P.A."/>
            <person name="Dante R.A."/>
            <person name="Leiva-Neto J.T."/>
            <person name="Jung R."/>
            <person name="Gordon-Kamm W.J."/>
            <person name="Larkins B.A."/>
        </authorList>
    </citation>
    <scope>NUCLEOTIDE SEQUENCE [MRNA]</scope>
</reference>
<reference key="2">
    <citation type="journal article" date="2007" name="J. Exp. Bot.">
        <title>Dicot and monocot plants differ in retinoblastoma-related protein subfamilies.</title>
        <authorList>
            <person name="Lendvai A."/>
            <person name="Pettko-Szandtner A."/>
            <person name="Csordas-Toth E."/>
            <person name="Miskolczi P."/>
            <person name="Horvath G.V."/>
            <person name="Gyoergyey J."/>
            <person name="Dudits D."/>
        </authorList>
    </citation>
    <scope>GENE FAMILY</scope>
    <scope>NOMENCLATURE</scope>
</reference>
<gene>
    <name type="primary">RBR3</name>
</gene>
<name>RBR3_MAIZE</name>
<evidence type="ECO:0000250" key="1"/>
<evidence type="ECO:0000256" key="2">
    <source>
        <dbReference type="SAM" id="MobiDB-lite"/>
    </source>
</evidence>
<evidence type="ECO:0000305" key="3"/>
<sequence length="1010" mass="111494">MEGFAKPSTSSGSGVTVRASVAAASIEERFADLCKAKLGLDESTTRQAMQLLKETNNILKSSMSSLGGGSPEEIERFWSACVLYCVSRLSKAGRSKEDGSVSLCQILRASKLNIVDFFKEMPQFCIKVAHILTGLYGSDWEKRLELKELQANVVHLSLLSSYYKRAYQELFLSNDGKSSDNSSESNNQEASDYYRFGWLLFLVLRIQTFSRFKDLVTSTNELVSVLAVLIIHVPVRLRNFDIKDSSYFGKKSDRGVSLIASLCEKHHTSEDELSKALEKTNTLIMDILKKKPCPATSACQQDNLSFIDPEGLTVFKDLLQGDSLKPSLIILEKEYENAINTKGELDERMFANDEDSLLGSGSLSGGAINLPGTKRKYDVMASPAKSISSPNPMSPPRFCLSPKGNGFCNSKMAPSTPVSTAMTTAKWLRNTVSPLPSRPSGELLRFFSACDKDLTDDIAHRAGIILGAIFTSSSFGERICTSMRSASRMDAIWTEQRKMEALKLYYRVLESMCRAESQILSGNNLTSLLSNERFHRCMIACSAELVLATHKTVTMMFPAVLEKTGITAFDLSKVIEGFVRHEDTLPRELKRHLNSLEERLLESMAWEKGSSMYNSLIVARPALSVEISRLGLLAEPMPSLDAIAAHHNISLGGLPPLPFQKQERLQDKDEVRSPKRACTERRNVLVDSNSLRSPVKDIIKPKLPPLQSAFASPTRPNPAAGGETCAETGIGVFFSKISKLAAIRIRSLCERLQLPQQVLERVYSLVQQILSQQTGLFFNRHIDQIILCSIYGVAKISQLELSFKEIIFGYRKQPQCKPQVFRSVYVHWPPRSRNGKTGEDHVDIITFYNEVFIPAVKSLLVEVGPGASASPKKKEEEKGPADVGPFPESPRLARFPNLPDMSPKKVSATHNVYVSPLRSSKMDTLLSPSSKSYYACVGESTYAFQSPSKDLKAINNRLNSVSGGKKVSGRLNFDVVSDLVVASSLGSDRDAKPAADPAKTTPVKCEPSDS</sequence>